<protein>
    <recommendedName>
        <fullName evidence="1">Glutamate--tRNA ligase 1</fullName>
        <ecNumber evidence="1">6.1.1.17</ecNumber>
    </recommendedName>
    <alternativeName>
        <fullName evidence="1">Glutamyl-tRNA synthetase 1</fullName>
        <shortName evidence="1">GluRS 1</shortName>
    </alternativeName>
</protein>
<name>SYE1_EHRRW</name>
<dbReference type="EC" id="6.1.1.17" evidence="1"/>
<dbReference type="EMBL" id="CR767821">
    <property type="protein sequence ID" value="CAH58494.1"/>
    <property type="molecule type" value="Genomic_DNA"/>
</dbReference>
<dbReference type="EMBL" id="CR925678">
    <property type="protein sequence ID" value="CAI27296.1"/>
    <property type="molecule type" value="Genomic_DNA"/>
</dbReference>
<dbReference type="RefSeq" id="WP_011155439.1">
    <property type="nucleotide sequence ID" value="NC_005295.2"/>
</dbReference>
<dbReference type="SMR" id="Q5HAC1"/>
<dbReference type="GeneID" id="33058121"/>
<dbReference type="KEGG" id="eru:Erum7610"/>
<dbReference type="KEGG" id="erw:ERWE_CDS_08020"/>
<dbReference type="eggNOG" id="COG0008">
    <property type="taxonomic scope" value="Bacteria"/>
</dbReference>
<dbReference type="HOGENOM" id="CLU_015768_6_1_5"/>
<dbReference type="Proteomes" id="UP000001021">
    <property type="component" value="Chromosome"/>
</dbReference>
<dbReference type="GO" id="GO:0005737">
    <property type="term" value="C:cytoplasm"/>
    <property type="evidence" value="ECO:0007669"/>
    <property type="project" value="UniProtKB-SubCell"/>
</dbReference>
<dbReference type="GO" id="GO:0005524">
    <property type="term" value="F:ATP binding"/>
    <property type="evidence" value="ECO:0007669"/>
    <property type="project" value="UniProtKB-UniRule"/>
</dbReference>
<dbReference type="GO" id="GO:0004818">
    <property type="term" value="F:glutamate-tRNA ligase activity"/>
    <property type="evidence" value="ECO:0007669"/>
    <property type="project" value="UniProtKB-UniRule"/>
</dbReference>
<dbReference type="GO" id="GO:0000049">
    <property type="term" value="F:tRNA binding"/>
    <property type="evidence" value="ECO:0007669"/>
    <property type="project" value="InterPro"/>
</dbReference>
<dbReference type="GO" id="GO:0006424">
    <property type="term" value="P:glutamyl-tRNA aminoacylation"/>
    <property type="evidence" value="ECO:0007669"/>
    <property type="project" value="UniProtKB-UniRule"/>
</dbReference>
<dbReference type="Gene3D" id="1.10.10.350">
    <property type="match status" value="1"/>
</dbReference>
<dbReference type="Gene3D" id="3.40.50.620">
    <property type="entry name" value="HUPs"/>
    <property type="match status" value="1"/>
</dbReference>
<dbReference type="HAMAP" id="MF_00022">
    <property type="entry name" value="Glu_tRNA_synth_type1"/>
    <property type="match status" value="1"/>
</dbReference>
<dbReference type="InterPro" id="IPR045462">
    <property type="entry name" value="aa-tRNA-synth_I_cd-bd"/>
</dbReference>
<dbReference type="InterPro" id="IPR020751">
    <property type="entry name" value="aa-tRNA-synth_I_codon-bd_sub2"/>
</dbReference>
<dbReference type="InterPro" id="IPR001412">
    <property type="entry name" value="aa-tRNA-synth_I_CS"/>
</dbReference>
<dbReference type="InterPro" id="IPR008925">
    <property type="entry name" value="aa_tRNA-synth_I_cd-bd_sf"/>
</dbReference>
<dbReference type="InterPro" id="IPR004527">
    <property type="entry name" value="Glu-tRNA-ligase_bac/mito"/>
</dbReference>
<dbReference type="InterPro" id="IPR000924">
    <property type="entry name" value="Glu/Gln-tRNA-synth"/>
</dbReference>
<dbReference type="InterPro" id="IPR020058">
    <property type="entry name" value="Glu/Gln-tRNA-synth_Ib_cat-dom"/>
</dbReference>
<dbReference type="InterPro" id="IPR049940">
    <property type="entry name" value="GluQ/Sye"/>
</dbReference>
<dbReference type="InterPro" id="IPR014729">
    <property type="entry name" value="Rossmann-like_a/b/a_fold"/>
</dbReference>
<dbReference type="NCBIfam" id="TIGR00464">
    <property type="entry name" value="gltX_bact"/>
    <property type="match status" value="1"/>
</dbReference>
<dbReference type="PANTHER" id="PTHR43311">
    <property type="entry name" value="GLUTAMATE--TRNA LIGASE"/>
    <property type="match status" value="1"/>
</dbReference>
<dbReference type="PANTHER" id="PTHR43311:SF2">
    <property type="entry name" value="GLUTAMATE--TRNA LIGASE, MITOCHONDRIAL-RELATED"/>
    <property type="match status" value="1"/>
</dbReference>
<dbReference type="Pfam" id="PF19269">
    <property type="entry name" value="Anticodon_2"/>
    <property type="match status" value="1"/>
</dbReference>
<dbReference type="Pfam" id="PF00749">
    <property type="entry name" value="tRNA-synt_1c"/>
    <property type="match status" value="1"/>
</dbReference>
<dbReference type="PRINTS" id="PR00987">
    <property type="entry name" value="TRNASYNTHGLU"/>
</dbReference>
<dbReference type="SUPFAM" id="SSF48163">
    <property type="entry name" value="An anticodon-binding domain of class I aminoacyl-tRNA synthetases"/>
    <property type="match status" value="1"/>
</dbReference>
<dbReference type="SUPFAM" id="SSF52374">
    <property type="entry name" value="Nucleotidylyl transferase"/>
    <property type="match status" value="1"/>
</dbReference>
<dbReference type="PROSITE" id="PS00178">
    <property type="entry name" value="AA_TRNA_LIGASE_I"/>
    <property type="match status" value="1"/>
</dbReference>
<keyword id="KW-0030">Aminoacyl-tRNA synthetase</keyword>
<keyword id="KW-0067">ATP-binding</keyword>
<keyword id="KW-0963">Cytoplasm</keyword>
<keyword id="KW-0436">Ligase</keyword>
<keyword id="KW-0547">Nucleotide-binding</keyword>
<keyword id="KW-0648">Protein biosynthesis</keyword>
<evidence type="ECO:0000255" key="1">
    <source>
        <dbReference type="HAMAP-Rule" id="MF_00022"/>
    </source>
</evidence>
<gene>
    <name evidence="1" type="primary">gltX1</name>
    <name type="ordered locus">Erum7610</name>
    <name type="ordered locus">ERWE_CDS_08020</name>
</gene>
<organism>
    <name type="scientific">Ehrlichia ruminantium (strain Welgevonden)</name>
    <dbReference type="NCBI Taxonomy" id="254945"/>
    <lineage>
        <taxon>Bacteria</taxon>
        <taxon>Pseudomonadati</taxon>
        <taxon>Pseudomonadota</taxon>
        <taxon>Alphaproteobacteria</taxon>
        <taxon>Rickettsiales</taxon>
        <taxon>Anaplasmataceae</taxon>
        <taxon>Ehrlichia</taxon>
    </lineage>
</organism>
<sequence length="443" mass="51634">MIMMTRFAPSPTGYLHVGNVRTALICWLYTRSKQGRFLLRFDDTDLQRSKDDYRNEIANDLKWLQMDWDFDVRQSSRFDRYDEIFNYLLKEELIYPCYESKEELDFKRKMQLKLGLPPIYDRSALKLTQDEKNKYSERDVYFRFKIDQSQLISWDDEIRGKVSFNAANISDPIVKRADGTYTYMLPSVIDDIDFDITHIVRGEDHISNTAIQIQMFNALKASVPTFSHLSLLYCDDNKISKRVGGFSIKDMQFYELEPMAINSYFAKIGTSDPIVVHTKIQDLIYTFDITKFNQAPTQFNIDDVIKLNPKVLHKMSFSDVKLRLSELNITSPDLWDFVSGNVQKFSDIKEWIRICGQTTVPVINESDQDFIKMALSVFPNGEINQDTWKTWVANIKEKTDRKSKDIFIPLRLALTGISTGPELAKLLPILGRAEIIRRLGYSR</sequence>
<feature type="chain" id="PRO_0000119560" description="Glutamate--tRNA ligase 1">
    <location>
        <begin position="1"/>
        <end position="443"/>
    </location>
</feature>
<feature type="short sequence motif" description="'HIGH' region" evidence="1">
    <location>
        <begin position="9"/>
        <end position="19"/>
    </location>
</feature>
<feature type="short sequence motif" description="'KMSKS' region" evidence="1">
    <location>
        <begin position="238"/>
        <end position="242"/>
    </location>
</feature>
<feature type="binding site" evidence="1">
    <location>
        <position position="241"/>
    </location>
    <ligand>
        <name>ATP</name>
        <dbReference type="ChEBI" id="CHEBI:30616"/>
    </ligand>
</feature>
<comment type="function">
    <text evidence="1">Catalyzes the attachment of glutamate to tRNA(Glu) in a two-step reaction: glutamate is first activated by ATP to form Glu-AMP and then transferred to the acceptor end of tRNA(Glu).</text>
</comment>
<comment type="catalytic activity">
    <reaction evidence="1">
        <text>tRNA(Glu) + L-glutamate + ATP = L-glutamyl-tRNA(Glu) + AMP + diphosphate</text>
        <dbReference type="Rhea" id="RHEA:23540"/>
        <dbReference type="Rhea" id="RHEA-COMP:9663"/>
        <dbReference type="Rhea" id="RHEA-COMP:9680"/>
        <dbReference type="ChEBI" id="CHEBI:29985"/>
        <dbReference type="ChEBI" id="CHEBI:30616"/>
        <dbReference type="ChEBI" id="CHEBI:33019"/>
        <dbReference type="ChEBI" id="CHEBI:78442"/>
        <dbReference type="ChEBI" id="CHEBI:78520"/>
        <dbReference type="ChEBI" id="CHEBI:456215"/>
        <dbReference type="EC" id="6.1.1.17"/>
    </reaction>
</comment>
<comment type="subunit">
    <text evidence="1">Monomer.</text>
</comment>
<comment type="subcellular location">
    <subcellularLocation>
        <location evidence="1">Cytoplasm</location>
    </subcellularLocation>
</comment>
<comment type="similarity">
    <text evidence="1">Belongs to the class-I aminoacyl-tRNA synthetase family. Glutamate--tRNA ligase type 1 subfamily.</text>
</comment>
<accession>Q5HAC1</accession>
<accession>Q5FDN6</accession>
<proteinExistence type="inferred from homology"/>
<reference key="1">
    <citation type="journal article" date="2005" name="Proc. Natl. Acad. Sci. U.S.A.">
        <title>The genome of the heartwater agent Ehrlichia ruminantium contains multiple tandem repeats of actively variable copy number.</title>
        <authorList>
            <person name="Collins N.E."/>
            <person name="Liebenberg J."/>
            <person name="de Villiers E.P."/>
            <person name="Brayton K.A."/>
            <person name="Louw E."/>
            <person name="Pretorius A."/>
            <person name="Faber F.E."/>
            <person name="van Heerden H."/>
            <person name="Josemans A."/>
            <person name="van Kleef M."/>
            <person name="Steyn H.C."/>
            <person name="van Strijp M.F."/>
            <person name="Zweygarth E."/>
            <person name="Jongejan F."/>
            <person name="Maillard J.C."/>
            <person name="Berthier D."/>
            <person name="Botha M."/>
            <person name="Joubert F."/>
            <person name="Corton C.H."/>
            <person name="Thomson N.R."/>
            <person name="Allsopp M.T."/>
            <person name="Allsopp B.A."/>
        </authorList>
    </citation>
    <scope>NUCLEOTIDE SEQUENCE [LARGE SCALE GENOMIC DNA]</scope>
    <source>
        <strain>Welgevonden</strain>
    </source>
</reference>
<reference key="2">
    <citation type="journal article" date="2006" name="J. Bacteriol.">
        <title>Comparative genomic analysis of three strains of Ehrlichia ruminantium reveals an active process of genome size plasticity.</title>
        <authorList>
            <person name="Frutos R."/>
            <person name="Viari A."/>
            <person name="Ferraz C."/>
            <person name="Morgat A."/>
            <person name="Eychenie S."/>
            <person name="Kandassamy Y."/>
            <person name="Chantal I."/>
            <person name="Bensaid A."/>
            <person name="Coissac E."/>
            <person name="Vachiery N."/>
            <person name="Demaille J."/>
            <person name="Martinez D."/>
        </authorList>
    </citation>
    <scope>NUCLEOTIDE SEQUENCE [LARGE SCALE GENOMIC DNA]</scope>
    <source>
        <strain>Welgevonden</strain>
    </source>
</reference>